<dbReference type="EC" id="2.7.8.35"/>
<dbReference type="EMBL" id="U15186">
    <property type="protein sequence ID" value="AAA63094.1"/>
    <property type="molecule type" value="Genomic_DNA"/>
</dbReference>
<dbReference type="EMBL" id="AL583920">
    <property type="protein sequence ID" value="CAC31518.1"/>
    <property type="status" value="ALT_INIT"/>
    <property type="molecule type" value="Genomic_DNA"/>
</dbReference>
<dbReference type="PIR" id="C87051">
    <property type="entry name" value="C87051"/>
</dbReference>
<dbReference type="PIR" id="T09982">
    <property type="entry name" value="T09982"/>
</dbReference>
<dbReference type="SMR" id="P45830"/>
<dbReference type="STRING" id="272631.gene:17574964"/>
<dbReference type="KEGG" id="mle:ML1137"/>
<dbReference type="Leproma" id="ML1137"/>
<dbReference type="eggNOG" id="COG0472">
    <property type="taxonomic scope" value="Bacteria"/>
</dbReference>
<dbReference type="HOGENOM" id="CLU_023982_2_2_11"/>
<dbReference type="UniPathway" id="UPA00963"/>
<dbReference type="Proteomes" id="UP000000806">
    <property type="component" value="Chromosome"/>
</dbReference>
<dbReference type="GO" id="GO:0005886">
    <property type="term" value="C:plasma membrane"/>
    <property type="evidence" value="ECO:0007669"/>
    <property type="project" value="UniProtKB-SubCell"/>
</dbReference>
<dbReference type="GO" id="GO:0016757">
    <property type="term" value="F:glycosyltransferase activity"/>
    <property type="evidence" value="ECO:0007669"/>
    <property type="project" value="UniProtKB-KW"/>
</dbReference>
<dbReference type="GO" id="GO:0000287">
    <property type="term" value="F:magnesium ion binding"/>
    <property type="evidence" value="ECO:0000250"/>
    <property type="project" value="UniProtKB"/>
</dbReference>
<dbReference type="GO" id="GO:0030145">
    <property type="term" value="F:manganese ion binding"/>
    <property type="evidence" value="ECO:0000250"/>
    <property type="project" value="UniProtKB"/>
</dbReference>
<dbReference type="GO" id="GO:0016780">
    <property type="term" value="F:phosphotransferase activity, for other substituted phosphate groups"/>
    <property type="evidence" value="ECO:0000250"/>
    <property type="project" value="UniProtKB"/>
</dbReference>
<dbReference type="GO" id="GO:0045227">
    <property type="term" value="P:capsule polysaccharide biosynthetic process"/>
    <property type="evidence" value="ECO:0007669"/>
    <property type="project" value="UniProtKB-UniPathway"/>
</dbReference>
<dbReference type="GO" id="GO:0044038">
    <property type="term" value="P:cell wall macromolecule biosynthetic process"/>
    <property type="evidence" value="ECO:0000250"/>
    <property type="project" value="UniProtKB"/>
</dbReference>
<dbReference type="GO" id="GO:0071555">
    <property type="term" value="P:cell wall organization"/>
    <property type="evidence" value="ECO:0000250"/>
    <property type="project" value="UniProtKB"/>
</dbReference>
<dbReference type="GO" id="GO:0009103">
    <property type="term" value="P:lipopolysaccharide biosynthetic process"/>
    <property type="evidence" value="ECO:0007669"/>
    <property type="project" value="TreeGrafter"/>
</dbReference>
<dbReference type="CDD" id="cd06853">
    <property type="entry name" value="GT_WecA_like"/>
    <property type="match status" value="1"/>
</dbReference>
<dbReference type="InterPro" id="IPR000715">
    <property type="entry name" value="Glycosyl_transferase_4"/>
</dbReference>
<dbReference type="PANTHER" id="PTHR22926">
    <property type="entry name" value="PHOSPHO-N-ACETYLMURAMOYL-PENTAPEPTIDE-TRANSFERASE"/>
    <property type="match status" value="1"/>
</dbReference>
<dbReference type="PANTHER" id="PTHR22926:SF3">
    <property type="entry name" value="UNDECAPRENYL-PHOSPHATE ALPHA-N-ACETYLGLUCOSAMINYL 1-PHOSPHATE TRANSFERASE"/>
    <property type="match status" value="1"/>
</dbReference>
<dbReference type="Pfam" id="PF00953">
    <property type="entry name" value="Glycos_transf_4"/>
    <property type="match status" value="1"/>
</dbReference>
<proteinExistence type="inferred from homology"/>
<name>WECA_MYCLE</name>
<accession>P45830</accession>
<gene>
    <name type="primary">wecA</name>
    <name type="synonym">rfe</name>
    <name type="ordered locus">ML1137</name>
</gene>
<evidence type="ECO:0000250" key="1"/>
<evidence type="ECO:0000255" key="2"/>
<evidence type="ECO:0000305" key="3"/>
<keyword id="KW-1003">Cell membrane</keyword>
<keyword id="KW-0961">Cell wall biogenesis/degradation</keyword>
<keyword id="KW-0328">Glycosyltransferase</keyword>
<keyword id="KW-0460">Magnesium</keyword>
<keyword id="KW-0464">Manganese</keyword>
<keyword id="KW-0472">Membrane</keyword>
<keyword id="KW-1185">Reference proteome</keyword>
<keyword id="KW-0808">Transferase</keyword>
<keyword id="KW-0812">Transmembrane</keyword>
<keyword id="KW-1133">Transmembrane helix</keyword>
<feature type="chain" id="PRO_0000108950" description="Decaprenyl-phosphate N-acetylglucosaminephosphotransferase">
    <location>
        <begin position="1"/>
        <end position="398"/>
    </location>
</feature>
<feature type="transmembrane region" description="Helical" evidence="2">
    <location>
        <begin position="33"/>
        <end position="53"/>
    </location>
</feature>
<feature type="transmembrane region" description="Helical" evidence="2">
    <location>
        <begin position="79"/>
        <end position="99"/>
    </location>
</feature>
<feature type="transmembrane region" description="Helical" evidence="2">
    <location>
        <begin position="105"/>
        <end position="125"/>
    </location>
</feature>
<feature type="transmembrane region" description="Helical" evidence="2">
    <location>
        <begin position="148"/>
        <end position="168"/>
    </location>
</feature>
<feature type="transmembrane region" description="Helical" evidence="2">
    <location>
        <begin position="175"/>
        <end position="195"/>
    </location>
</feature>
<feature type="transmembrane region" description="Helical" evidence="2">
    <location>
        <begin position="198"/>
        <end position="218"/>
    </location>
</feature>
<feature type="transmembrane region" description="Helical" evidence="2">
    <location>
        <begin position="225"/>
        <end position="245"/>
    </location>
</feature>
<feature type="transmembrane region" description="Helical" evidence="2">
    <location>
        <begin position="260"/>
        <end position="280"/>
    </location>
</feature>
<feature type="transmembrane region" description="Helical" evidence="2">
    <location>
        <begin position="295"/>
        <end position="315"/>
    </location>
</feature>
<feature type="transmembrane region" description="Helical" evidence="2">
    <location>
        <begin position="347"/>
        <end position="367"/>
    </location>
</feature>
<feature type="transmembrane region" description="Helical" evidence="2">
    <location>
        <begin position="372"/>
        <end position="392"/>
    </location>
</feature>
<feature type="site" description="Important in orienting the substrate" evidence="1">
    <location>
        <position position="126"/>
    </location>
</feature>
<feature type="site" description="Important in orienting the substrate; probably interacts with magnesium or manganese" evidence="1">
    <location>
        <position position="127"/>
    </location>
</feature>
<feature type="site" description="Could be required for catalysis" evidence="1">
    <location>
        <position position="193"/>
    </location>
</feature>
<feature type="site" description="Could be required for catalysis" evidence="1">
    <location>
        <position position="196"/>
    </location>
</feature>
<organism>
    <name type="scientific">Mycobacterium leprae (strain TN)</name>
    <dbReference type="NCBI Taxonomy" id="272631"/>
    <lineage>
        <taxon>Bacteria</taxon>
        <taxon>Bacillati</taxon>
        <taxon>Actinomycetota</taxon>
        <taxon>Actinomycetes</taxon>
        <taxon>Mycobacteriales</taxon>
        <taxon>Mycobacteriaceae</taxon>
        <taxon>Mycobacterium</taxon>
    </lineage>
</organism>
<sequence>MQYVREMSSDLATFASGLLALFERSAGVPLRELALVGLTAAIITYFATGLVGVLANRLEAVAYPRERDVHVTPTPRMGGLAMYLGVLAAVFLASQLPALTRGFVYSSGMPAVLVAGAVITGIGLIDDRWGLDALTKFAGQITAASVLVTMGVAWSVLYIPLGGVGTIVLDQTSSILLTLALTVSIVNAINFVDGLDGLAAGLGLITAMAICIFSVGLLRDHDGDVLFYPPAVISVVLAGSCLGFLPHNFHRAKIFMGDSGSMLVGLMLAAASTTAAGPISQNAYGTRDVFALLSPFLLVVAVMFVPMLDLLLAIVRRIRAGRSAFSPDKMHLHHRLLQIGHSHRRVVLLIYLWVGIVAFGAASTIFFNPRNTGAVMLGAIVITGMATVIPLLRRRDNY</sequence>
<protein>
    <recommendedName>
        <fullName>Decaprenyl-phosphate N-acetylglucosaminephosphotransferase</fullName>
        <ecNumber>2.7.8.35</ecNumber>
    </recommendedName>
    <alternativeName>
        <fullName>Decaprenyl-phosphate GlcNAc-1-phosphate transferase</fullName>
    </alternativeName>
    <alternativeName>
        <fullName>Decaprenyl-phosphate alpha-N-acetylglucosaminyl 1-phosphate transferase</fullName>
    </alternativeName>
    <alternativeName>
        <fullName>UDP-GlcNAc:decaprenyl-phosphate GlcNAc-1-phosphate transferase</fullName>
    </alternativeName>
    <alternativeName>
        <fullName>UDP-N-acetylglucosamine--decaprenyl-phosphate N-acetylglucosaminephosphotransferase</fullName>
    </alternativeName>
</protein>
<comment type="function">
    <text evidence="1">Involved in the biosynthesis of the disaccharide D-N-acetylglucosamine-L-rhamnose which plays an important role in the mycobacterial cell wall as a linker connecting arabinogalactan and peptidoglycan via a phosphodiester linkage. Catalyzes the transfer of the N-acetylglucosamine-1-phosphate (GlcNAc-1P) moiety from UDP-GlcNAc onto the carrier lipid decaprenyl phosphate (C50-P), yielding GlcNAc-pyrophosphoryl-decaprenyl (GlcNAc-PP-C50) (By similarity).</text>
</comment>
<comment type="catalytic activity">
    <reaction>
        <text>trans,octa-cis-decaprenyl phosphate + UDP-N-acetyl-alpha-D-glucosamine = N-acetyl-alpha-D-glucosaminyl-1-diphospho-trans,octa-cis-decaprenol + UMP</text>
        <dbReference type="Rhea" id="RHEA:34071"/>
        <dbReference type="ChEBI" id="CHEBI:57705"/>
        <dbReference type="ChEBI" id="CHEBI:57865"/>
        <dbReference type="ChEBI" id="CHEBI:65079"/>
        <dbReference type="ChEBI" id="CHEBI:65080"/>
        <dbReference type="EC" id="2.7.8.35"/>
    </reaction>
</comment>
<comment type="cofactor">
    <cofactor evidence="1">
        <name>Mg(2+)</name>
        <dbReference type="ChEBI" id="CHEBI:18420"/>
    </cofactor>
</comment>
<comment type="cofactor">
    <cofactor evidence="1">
        <name>Mn(2+)</name>
        <dbReference type="ChEBI" id="CHEBI:29035"/>
    </cofactor>
</comment>
<comment type="pathway">
    <text>Cell wall biogenesis; cell wall polysaccharide biosynthesis.</text>
</comment>
<comment type="subcellular location">
    <subcellularLocation>
        <location evidence="1">Cell membrane</location>
        <topology evidence="1">Multi-pass membrane protein</topology>
    </subcellularLocation>
</comment>
<comment type="miscellaneous">
    <text evidence="1">Mycobacteria use decaprenyl phosphate (C50-P) as a lipid carrier in all known cell wall biosynthetic pathways, rather than the usual undecaprenyl phosphate (C55-P) usually used in Gram-negative bacteria.</text>
</comment>
<comment type="similarity">
    <text evidence="3">Belongs to the glycosyltransferase 4 family. WecA subfamily.</text>
</comment>
<comment type="sequence caution" evidence="3">
    <conflict type="erroneous initiation">
        <sequence resource="EMBL-CDS" id="CAC31518"/>
    </conflict>
    <text>Truncated N-terminus.</text>
</comment>
<reference key="1">
    <citation type="submission" date="1994-09" db="EMBL/GenBank/DDBJ databases">
        <authorList>
            <person name="Smith D.R."/>
            <person name="Robison K."/>
        </authorList>
    </citation>
    <scope>NUCLEOTIDE SEQUENCE [GENOMIC DNA]</scope>
</reference>
<reference key="2">
    <citation type="journal article" date="2001" name="Nature">
        <title>Massive gene decay in the leprosy bacillus.</title>
        <authorList>
            <person name="Cole S.T."/>
            <person name="Eiglmeier K."/>
            <person name="Parkhill J."/>
            <person name="James K.D."/>
            <person name="Thomson N.R."/>
            <person name="Wheeler P.R."/>
            <person name="Honore N."/>
            <person name="Garnier T."/>
            <person name="Churcher C.M."/>
            <person name="Harris D.E."/>
            <person name="Mungall K.L."/>
            <person name="Basham D."/>
            <person name="Brown D."/>
            <person name="Chillingworth T."/>
            <person name="Connor R."/>
            <person name="Davies R.M."/>
            <person name="Devlin K."/>
            <person name="Duthoy S."/>
            <person name="Feltwell T."/>
            <person name="Fraser A."/>
            <person name="Hamlin N."/>
            <person name="Holroyd S."/>
            <person name="Hornsby T."/>
            <person name="Jagels K."/>
            <person name="Lacroix C."/>
            <person name="Maclean J."/>
            <person name="Moule S."/>
            <person name="Murphy L.D."/>
            <person name="Oliver K."/>
            <person name="Quail M.A."/>
            <person name="Rajandream M.A."/>
            <person name="Rutherford K.M."/>
            <person name="Rutter S."/>
            <person name="Seeger K."/>
            <person name="Simon S."/>
            <person name="Simmonds M."/>
            <person name="Skelton J."/>
            <person name="Squares R."/>
            <person name="Squares S."/>
            <person name="Stevens K."/>
            <person name="Taylor K."/>
            <person name="Whitehead S."/>
            <person name="Woodward J.R."/>
            <person name="Barrell B.G."/>
        </authorList>
    </citation>
    <scope>NUCLEOTIDE SEQUENCE [LARGE SCALE GENOMIC DNA]</scope>
    <source>
        <strain>TN</strain>
    </source>
</reference>